<dbReference type="EMBL" id="EU276062">
    <property type="protein sequence ID" value="ABX72060.1"/>
    <property type="molecule type" value="mRNA"/>
</dbReference>
<dbReference type="EMBL" id="BC112547">
    <property type="protein sequence ID" value="AAI12548.1"/>
    <property type="molecule type" value="mRNA"/>
</dbReference>
<dbReference type="RefSeq" id="NP_001040016.1">
    <property type="nucleotide sequence ID" value="NM_001046551.2"/>
</dbReference>
<dbReference type="SMR" id="Q2KIQ8"/>
<dbReference type="FunCoup" id="Q2KIQ8">
    <property type="interactions" value="453"/>
</dbReference>
<dbReference type="STRING" id="9913.ENSBTAP00000039324"/>
<dbReference type="PaxDb" id="9913-ENSBTAP00000039324"/>
<dbReference type="Ensembl" id="ENSBTAT00000039533.5">
    <property type="protein sequence ID" value="ENSBTAP00000039324.3"/>
    <property type="gene ID" value="ENSBTAG00000001725.6"/>
</dbReference>
<dbReference type="GeneID" id="615107"/>
<dbReference type="KEGG" id="bta:615107"/>
<dbReference type="CTD" id="3627"/>
<dbReference type="VEuPathDB" id="HostDB:ENSBTAG00000001725"/>
<dbReference type="VGNC" id="VGNC:27846">
    <property type="gene designation" value="CXCL10"/>
</dbReference>
<dbReference type="eggNOG" id="ENOG502S7MM">
    <property type="taxonomic scope" value="Eukaryota"/>
</dbReference>
<dbReference type="GeneTree" id="ENSGT00940000161759"/>
<dbReference type="HOGENOM" id="CLU_143902_2_2_1"/>
<dbReference type="InParanoid" id="Q2KIQ8"/>
<dbReference type="OMA" id="RNIRCRC"/>
<dbReference type="OrthoDB" id="9948647at2759"/>
<dbReference type="TreeFam" id="TF333433"/>
<dbReference type="Reactome" id="R-BTA-380108">
    <property type="pathway name" value="Chemokine receptors bind chemokines"/>
</dbReference>
<dbReference type="Reactome" id="R-BTA-418594">
    <property type="pathway name" value="G alpha (i) signalling events"/>
</dbReference>
<dbReference type="Proteomes" id="UP000009136">
    <property type="component" value="Chromosome 6"/>
</dbReference>
<dbReference type="Bgee" id="ENSBTAG00000001725">
    <property type="expression patterns" value="Expressed in abdominal lymph node and 99 other cell types or tissues"/>
</dbReference>
<dbReference type="GO" id="GO:0009897">
    <property type="term" value="C:external side of plasma membrane"/>
    <property type="evidence" value="ECO:0007669"/>
    <property type="project" value="Ensembl"/>
</dbReference>
<dbReference type="GO" id="GO:0005615">
    <property type="term" value="C:extracellular space"/>
    <property type="evidence" value="ECO:0000318"/>
    <property type="project" value="GO_Central"/>
</dbReference>
<dbReference type="GO" id="GO:0042056">
    <property type="term" value="F:chemoattractant activity"/>
    <property type="evidence" value="ECO:0007669"/>
    <property type="project" value="Ensembl"/>
</dbReference>
<dbReference type="GO" id="GO:0008009">
    <property type="term" value="F:chemokine activity"/>
    <property type="evidence" value="ECO:0000250"/>
    <property type="project" value="UniProtKB"/>
</dbReference>
<dbReference type="GO" id="GO:0045236">
    <property type="term" value="F:CXCR chemokine receptor binding"/>
    <property type="evidence" value="ECO:0000318"/>
    <property type="project" value="GO_Central"/>
</dbReference>
<dbReference type="GO" id="GO:0048248">
    <property type="term" value="F:CXCR3 chemokine receptor binding"/>
    <property type="evidence" value="ECO:0000250"/>
    <property type="project" value="UniProtKB"/>
</dbReference>
<dbReference type="GO" id="GO:0008201">
    <property type="term" value="F:heparin binding"/>
    <property type="evidence" value="ECO:0007669"/>
    <property type="project" value="Ensembl"/>
</dbReference>
<dbReference type="GO" id="GO:0007189">
    <property type="term" value="P:adenylate cyclase-activating G protein-coupled receptor signaling pathway"/>
    <property type="evidence" value="ECO:0000250"/>
    <property type="project" value="UniProtKB"/>
</dbReference>
<dbReference type="GO" id="GO:0140374">
    <property type="term" value="P:antiviral innate immune response"/>
    <property type="evidence" value="ECO:0007669"/>
    <property type="project" value="Ensembl"/>
</dbReference>
<dbReference type="GO" id="GO:0097398">
    <property type="term" value="P:cellular response to interleukin-17"/>
    <property type="evidence" value="ECO:0007669"/>
    <property type="project" value="Ensembl"/>
</dbReference>
<dbReference type="GO" id="GO:0071222">
    <property type="term" value="P:cellular response to lipopolysaccharide"/>
    <property type="evidence" value="ECO:0000318"/>
    <property type="project" value="GO_Central"/>
</dbReference>
<dbReference type="GO" id="GO:0098586">
    <property type="term" value="P:cellular response to virus"/>
    <property type="evidence" value="ECO:0007669"/>
    <property type="project" value="Ensembl"/>
</dbReference>
<dbReference type="GO" id="GO:0070098">
    <property type="term" value="P:chemokine-mediated signaling pathway"/>
    <property type="evidence" value="ECO:0000318"/>
    <property type="project" value="GO_Central"/>
</dbReference>
<dbReference type="GO" id="GO:0006935">
    <property type="term" value="P:chemotaxis"/>
    <property type="evidence" value="ECO:0000250"/>
    <property type="project" value="UniProtKB"/>
</dbReference>
<dbReference type="GO" id="GO:0042118">
    <property type="term" value="P:endothelial cell activation"/>
    <property type="evidence" value="ECO:0007669"/>
    <property type="project" value="Ensembl"/>
</dbReference>
<dbReference type="GO" id="GO:0007186">
    <property type="term" value="P:G protein-coupled receptor signaling pathway"/>
    <property type="evidence" value="ECO:0000250"/>
    <property type="project" value="UniProtKB"/>
</dbReference>
<dbReference type="GO" id="GO:0006954">
    <property type="term" value="P:inflammatory response"/>
    <property type="evidence" value="ECO:0000318"/>
    <property type="project" value="GO_Central"/>
</dbReference>
<dbReference type="GO" id="GO:0016525">
    <property type="term" value="P:negative regulation of angiogenesis"/>
    <property type="evidence" value="ECO:0007669"/>
    <property type="project" value="Ensembl"/>
</dbReference>
<dbReference type="GO" id="GO:0045662">
    <property type="term" value="P:negative regulation of myoblast differentiation"/>
    <property type="evidence" value="ECO:0007669"/>
    <property type="project" value="Ensembl"/>
</dbReference>
<dbReference type="GO" id="GO:1901740">
    <property type="term" value="P:negative regulation of myoblast fusion"/>
    <property type="evidence" value="ECO:0007669"/>
    <property type="project" value="Ensembl"/>
</dbReference>
<dbReference type="GO" id="GO:0030593">
    <property type="term" value="P:neutrophil chemotaxis"/>
    <property type="evidence" value="ECO:0000318"/>
    <property type="project" value="GO_Central"/>
</dbReference>
<dbReference type="GO" id="GO:0090026">
    <property type="term" value="P:positive regulation of monocyte chemotaxis"/>
    <property type="evidence" value="ECO:0007669"/>
    <property type="project" value="Ensembl"/>
</dbReference>
<dbReference type="GO" id="GO:0051281">
    <property type="term" value="P:positive regulation of release of sequestered calcium ion into cytosol"/>
    <property type="evidence" value="ECO:0000250"/>
    <property type="project" value="UniProtKB"/>
</dbReference>
<dbReference type="GO" id="GO:2000406">
    <property type="term" value="P:positive regulation of T cell migration"/>
    <property type="evidence" value="ECO:0007669"/>
    <property type="project" value="Ensembl"/>
</dbReference>
<dbReference type="GO" id="GO:0042981">
    <property type="term" value="P:regulation of apoptotic process"/>
    <property type="evidence" value="ECO:0007669"/>
    <property type="project" value="Ensembl"/>
</dbReference>
<dbReference type="GO" id="GO:0042127">
    <property type="term" value="P:regulation of cell population proliferation"/>
    <property type="evidence" value="ECO:0000250"/>
    <property type="project" value="UniProtKB"/>
</dbReference>
<dbReference type="GO" id="GO:1901509">
    <property type="term" value="P:regulation of endothelial tube morphogenesis"/>
    <property type="evidence" value="ECO:0007669"/>
    <property type="project" value="Ensembl"/>
</dbReference>
<dbReference type="GO" id="GO:0010819">
    <property type="term" value="P:regulation of T cell chemotaxis"/>
    <property type="evidence" value="ECO:0007669"/>
    <property type="project" value="Ensembl"/>
</dbReference>
<dbReference type="GO" id="GO:0010818">
    <property type="term" value="P:T cell chemotaxis"/>
    <property type="evidence" value="ECO:0007669"/>
    <property type="project" value="Ensembl"/>
</dbReference>
<dbReference type="CDD" id="cd00273">
    <property type="entry name" value="Chemokine_CXC"/>
    <property type="match status" value="1"/>
</dbReference>
<dbReference type="FunFam" id="2.40.50.40:FF:000004">
    <property type="entry name" value="C-X-C motif chemokine"/>
    <property type="match status" value="1"/>
</dbReference>
<dbReference type="Gene3D" id="2.40.50.40">
    <property type="match status" value="1"/>
</dbReference>
<dbReference type="InterPro" id="IPR039809">
    <property type="entry name" value="Chemokine_b/g/d"/>
</dbReference>
<dbReference type="InterPro" id="IPR001089">
    <property type="entry name" value="Chemokine_CXC"/>
</dbReference>
<dbReference type="InterPro" id="IPR018048">
    <property type="entry name" value="Chemokine_CXC_CS"/>
</dbReference>
<dbReference type="InterPro" id="IPR001811">
    <property type="entry name" value="Chemokine_IL8-like_dom"/>
</dbReference>
<dbReference type="InterPro" id="IPR033899">
    <property type="entry name" value="CXC_Chemokine_domain"/>
</dbReference>
<dbReference type="InterPro" id="IPR036048">
    <property type="entry name" value="Interleukin_8-like_sf"/>
</dbReference>
<dbReference type="PANTHER" id="PTHR12015:SF188">
    <property type="entry name" value="C-X-C MOTIF CHEMOKINE 10"/>
    <property type="match status" value="1"/>
</dbReference>
<dbReference type="PANTHER" id="PTHR12015">
    <property type="entry name" value="SMALL INDUCIBLE CYTOKINE A"/>
    <property type="match status" value="1"/>
</dbReference>
<dbReference type="Pfam" id="PF00048">
    <property type="entry name" value="IL8"/>
    <property type="match status" value="1"/>
</dbReference>
<dbReference type="PRINTS" id="PR00436">
    <property type="entry name" value="INTERLEUKIN8"/>
</dbReference>
<dbReference type="PRINTS" id="PR00437">
    <property type="entry name" value="SMALLCYTKCXC"/>
</dbReference>
<dbReference type="SMART" id="SM00199">
    <property type="entry name" value="SCY"/>
    <property type="match status" value="1"/>
</dbReference>
<dbReference type="SUPFAM" id="SSF54117">
    <property type="entry name" value="Interleukin 8-like chemokines"/>
    <property type="match status" value="1"/>
</dbReference>
<dbReference type="PROSITE" id="PS00471">
    <property type="entry name" value="SMALL_CYTOKINES_CXC"/>
    <property type="match status" value="1"/>
</dbReference>
<proteinExistence type="inferred from homology"/>
<accession>Q2KIQ8</accession>
<organism>
    <name type="scientific">Bos taurus</name>
    <name type="common">Bovine</name>
    <dbReference type="NCBI Taxonomy" id="9913"/>
    <lineage>
        <taxon>Eukaryota</taxon>
        <taxon>Metazoa</taxon>
        <taxon>Chordata</taxon>
        <taxon>Craniata</taxon>
        <taxon>Vertebrata</taxon>
        <taxon>Euteleostomi</taxon>
        <taxon>Mammalia</taxon>
        <taxon>Eutheria</taxon>
        <taxon>Laurasiatheria</taxon>
        <taxon>Artiodactyla</taxon>
        <taxon>Ruminantia</taxon>
        <taxon>Pecora</taxon>
        <taxon>Bovidae</taxon>
        <taxon>Bovinae</taxon>
        <taxon>Bos</taxon>
    </lineage>
</organism>
<protein>
    <recommendedName>
        <fullName>C-X-C motif chemokine 10</fullName>
    </recommendedName>
    <alternativeName>
        <fullName>Small-inducible cytokine B10</fullName>
    </alternativeName>
</protein>
<evidence type="ECO:0000250" key="1">
    <source>
        <dbReference type="UniProtKB" id="P02778"/>
    </source>
</evidence>
<evidence type="ECO:0000250" key="2">
    <source>
        <dbReference type="UniProtKB" id="P17515"/>
    </source>
</evidence>
<evidence type="ECO:0000255" key="3"/>
<evidence type="ECO:0000305" key="4"/>
<reference key="1">
    <citation type="submission" date="2007-11" db="EMBL/GenBank/DDBJ databases">
        <title>U.S. veterinary immune reagent network: expressed bovine gene sequences.</title>
        <authorList>
            <consortium name="U.S. Veterinary Immune Reagent Network"/>
            <person name="Hudgens T."/>
            <person name="Tompkins D."/>
            <person name="Baldwin C.L."/>
        </authorList>
    </citation>
    <scope>NUCLEOTIDE SEQUENCE [LARGE SCALE MRNA]</scope>
    <source>
        <strain>Belted Galloway</strain>
        <tissue>Peripheral blood</tissue>
    </source>
</reference>
<reference key="2">
    <citation type="submission" date="2006-01" db="EMBL/GenBank/DDBJ databases">
        <authorList>
            <consortium name="NIH - Mammalian Gene Collection (MGC) project"/>
        </authorList>
    </citation>
    <scope>NUCLEOTIDE SEQUENCE [LARGE SCALE MRNA]</scope>
    <source>
        <strain>Hereford</strain>
        <tissue>Testis</tissue>
    </source>
</reference>
<name>CXL10_BOVIN</name>
<sequence length="102" mass="11427">MNKSGFLIFCLILLTLSQGVPLSRNTRCSCIEISNGSVNPRSLEKLEVIPASQSCPRVEIIATMKKNGEKRCLNPESKTIKNLLKAINKQRTKRSPRTRKEA</sequence>
<gene>
    <name type="primary">CXCL10</name>
</gene>
<feature type="signal peptide" evidence="3">
    <location>
        <begin position="1"/>
        <end position="19"/>
    </location>
</feature>
<feature type="chain" id="PRO_0000326171" description="C-X-C motif chemokine 10">
    <location>
        <begin position="20"/>
        <end position="102"/>
    </location>
</feature>
<feature type="modified residue" description="Citrulline" evidence="1">
    <location>
        <position position="24"/>
    </location>
</feature>
<feature type="disulfide bond" evidence="1">
    <location>
        <begin position="28"/>
        <end position="55"/>
    </location>
</feature>
<feature type="disulfide bond" evidence="1">
    <location>
        <begin position="30"/>
        <end position="72"/>
    </location>
</feature>
<keyword id="KW-0145">Chemotaxis</keyword>
<keyword id="KW-0164">Citrullination</keyword>
<keyword id="KW-0202">Cytokine</keyword>
<keyword id="KW-1015">Disulfide bond</keyword>
<keyword id="KW-0395">Inflammatory response</keyword>
<keyword id="KW-1185">Reference proteome</keyword>
<keyword id="KW-0964">Secreted</keyword>
<keyword id="KW-0732">Signal</keyword>
<comment type="function">
    <text evidence="1 2">Pro-inflammatory cytokine that is involved in a wide variety of processes such as chemotaxis, differentiation, and activation of peripheral immune cells, regulation of cell growth, apoptosis and modulation of angiostatic effects (By similarity). Plays thereby an important role during viral infections by stimulating the activation and migration of immune cells to the infected sites (By similarity). Mechanistically, binding of CXCL10 to the CXCR3 receptor activates G protein-mediated signaling and results in downstream activation of phospholipase C-dependent pathway, an increase in intracellular calcium production and actin reorganization. In turn, recruitment of activated Th1 lymphocytes occurs at sites of inflammation (By similarity). Activation of the CXCL10/CXCR3 axis also plays an important role in neurons in response to brain injury for activating microglia, the resident macrophage population of the central nervous system, and directing them to the lesion site. This recruitment is an essential element for neuronal reorganization (By similarity).</text>
</comment>
<comment type="subunit">
    <text evidence="1">Monomer, dimer, and tetramer. Interacts with CXCR3 (via N-terminus).</text>
</comment>
<comment type="subcellular location">
    <subcellularLocation>
        <location evidence="1">Secreted</location>
    </subcellularLocation>
</comment>
<comment type="similarity">
    <text evidence="4">Belongs to the intercrine alpha (chemokine CxC) family.</text>
</comment>